<sequence length="852" mass="94526">MSSVSPIQIPSRLPLLLTHESVLLPGSTMRTSVDTARNLQLVRSRLLKGTSLQSTILGVIPNTPDPASDTQDLPPLHRIGTAALAVQVVGSNWPKPHYTLLITGLCRFQIVQVLKEKPYPVAEVEQLDRLEEFPNICKSREELGELSEQFYRYAVQLVEMLDMSVPAVAKLRRLLDNLPREALPDILTSIIRTSNKEKLQILDAVSLEDRFKMTIPLLVRQIEGLKLLQKTRKPKQDDDKRVIAIRPIRRIPHIPGTLEDEEEEEDNDDIVMLEKKIRTSSMPEQAHKVCVKEIKRLKKMPQSMPEYALTRNYLELMVELPWNKSTTDRLDIRAARILLDNDHYAMEKLKRRVLEYLAVRQLKNNLKGPILCFVGPPGVGKTSVGRSVAKTLGREFHRIALGGVCDQSDIRGHRRTYVGSMPGRIINGLKTVGVNNPVFLLDEVDKLGKSLQGDPAAALLEVLDPEQNHNFTDHYLNVAFDLSQVLFIATANTTATIPPALLDRMEIIQVPGYTQEEKIEIAHRHLIPKQLEQHGLTPQQIQIPQHTTLAIITRYTREAGVRSLDRKFGAICRAVAVKVAEGQHKEAKLDRSDVADGEGCKEHVLEDAKPESISDTADLALPPEMPILIDSHALKDILGPPLYELEVSERLSQPGVAIGLAWTPLGGKIMFVEASRMDGEGQLTLTGQLGDVMKESAHLAISWLRSNAKKYHLTNAFGSFDLLDNTDIHLHFPAGAVTKDGPSAGVTIVTCLASLFSGRLVRSDVAMTGEITLRGLVLPVGGIKDKVLAAHRAGLKQIIIPQRNEKDLEEIPSNVRQDLSFVTASCLDEVLNAAFDGGFPVKTRPGLIDSKL</sequence>
<accession>Q9DBN5</accession>
<accession>Q3TEG8</accession>
<accession>Q3TFY6</accession>
<accession>Q3TGR0</accession>
<accession>Q3UAE1</accession>
<keyword id="KW-0007">Acetylation</keyword>
<keyword id="KW-0025">Alternative splicing</keyword>
<keyword id="KW-0067">ATP-binding</keyword>
<keyword id="KW-0378">Hydrolase</keyword>
<keyword id="KW-0547">Nucleotide-binding</keyword>
<keyword id="KW-0576">Peroxisome</keyword>
<keyword id="KW-0645">Protease</keyword>
<keyword id="KW-1185">Reference proteome</keyword>
<keyword id="KW-0720">Serine protease</keyword>
<evidence type="ECO:0000250" key="1">
    <source>
        <dbReference type="UniProtKB" id="Q86WA8"/>
    </source>
</evidence>
<evidence type="ECO:0000255" key="2">
    <source>
        <dbReference type="HAMAP-Rule" id="MF_03121"/>
    </source>
</evidence>
<evidence type="ECO:0000255" key="3">
    <source>
        <dbReference type="PROSITE-ProRule" id="PRU01122"/>
    </source>
</evidence>
<evidence type="ECO:0000255" key="4">
    <source>
        <dbReference type="PROSITE-ProRule" id="PRU01123"/>
    </source>
</evidence>
<evidence type="ECO:0000303" key="5">
    <source>
    </source>
</evidence>
<evidence type="ECO:0000305" key="6"/>
<name>LONP2_MOUSE</name>
<reference key="1">
    <citation type="journal article" date="2005" name="Science">
        <title>The transcriptional landscape of the mammalian genome.</title>
        <authorList>
            <person name="Carninci P."/>
            <person name="Kasukawa T."/>
            <person name="Katayama S."/>
            <person name="Gough J."/>
            <person name="Frith M.C."/>
            <person name="Maeda N."/>
            <person name="Oyama R."/>
            <person name="Ravasi T."/>
            <person name="Lenhard B."/>
            <person name="Wells C."/>
            <person name="Kodzius R."/>
            <person name="Shimokawa K."/>
            <person name="Bajic V.B."/>
            <person name="Brenner S.E."/>
            <person name="Batalov S."/>
            <person name="Forrest A.R."/>
            <person name="Zavolan M."/>
            <person name="Davis M.J."/>
            <person name="Wilming L.G."/>
            <person name="Aidinis V."/>
            <person name="Allen J.E."/>
            <person name="Ambesi-Impiombato A."/>
            <person name="Apweiler R."/>
            <person name="Aturaliya R.N."/>
            <person name="Bailey T.L."/>
            <person name="Bansal M."/>
            <person name="Baxter L."/>
            <person name="Beisel K.W."/>
            <person name="Bersano T."/>
            <person name="Bono H."/>
            <person name="Chalk A.M."/>
            <person name="Chiu K.P."/>
            <person name="Choudhary V."/>
            <person name="Christoffels A."/>
            <person name="Clutterbuck D.R."/>
            <person name="Crowe M.L."/>
            <person name="Dalla E."/>
            <person name="Dalrymple B.P."/>
            <person name="de Bono B."/>
            <person name="Della Gatta G."/>
            <person name="di Bernardo D."/>
            <person name="Down T."/>
            <person name="Engstrom P."/>
            <person name="Fagiolini M."/>
            <person name="Faulkner G."/>
            <person name="Fletcher C.F."/>
            <person name="Fukushima T."/>
            <person name="Furuno M."/>
            <person name="Futaki S."/>
            <person name="Gariboldi M."/>
            <person name="Georgii-Hemming P."/>
            <person name="Gingeras T.R."/>
            <person name="Gojobori T."/>
            <person name="Green R.E."/>
            <person name="Gustincich S."/>
            <person name="Harbers M."/>
            <person name="Hayashi Y."/>
            <person name="Hensch T.K."/>
            <person name="Hirokawa N."/>
            <person name="Hill D."/>
            <person name="Huminiecki L."/>
            <person name="Iacono M."/>
            <person name="Ikeo K."/>
            <person name="Iwama A."/>
            <person name="Ishikawa T."/>
            <person name="Jakt M."/>
            <person name="Kanapin A."/>
            <person name="Katoh M."/>
            <person name="Kawasawa Y."/>
            <person name="Kelso J."/>
            <person name="Kitamura H."/>
            <person name="Kitano H."/>
            <person name="Kollias G."/>
            <person name="Krishnan S.P."/>
            <person name="Kruger A."/>
            <person name="Kummerfeld S.K."/>
            <person name="Kurochkin I.V."/>
            <person name="Lareau L.F."/>
            <person name="Lazarevic D."/>
            <person name="Lipovich L."/>
            <person name="Liu J."/>
            <person name="Liuni S."/>
            <person name="McWilliam S."/>
            <person name="Madan Babu M."/>
            <person name="Madera M."/>
            <person name="Marchionni L."/>
            <person name="Matsuda H."/>
            <person name="Matsuzawa S."/>
            <person name="Miki H."/>
            <person name="Mignone F."/>
            <person name="Miyake S."/>
            <person name="Morris K."/>
            <person name="Mottagui-Tabar S."/>
            <person name="Mulder N."/>
            <person name="Nakano N."/>
            <person name="Nakauchi H."/>
            <person name="Ng P."/>
            <person name="Nilsson R."/>
            <person name="Nishiguchi S."/>
            <person name="Nishikawa S."/>
            <person name="Nori F."/>
            <person name="Ohara O."/>
            <person name="Okazaki Y."/>
            <person name="Orlando V."/>
            <person name="Pang K.C."/>
            <person name="Pavan W.J."/>
            <person name="Pavesi G."/>
            <person name="Pesole G."/>
            <person name="Petrovsky N."/>
            <person name="Piazza S."/>
            <person name="Reed J."/>
            <person name="Reid J.F."/>
            <person name="Ring B.Z."/>
            <person name="Ringwald M."/>
            <person name="Rost B."/>
            <person name="Ruan Y."/>
            <person name="Salzberg S.L."/>
            <person name="Sandelin A."/>
            <person name="Schneider C."/>
            <person name="Schoenbach C."/>
            <person name="Sekiguchi K."/>
            <person name="Semple C.A."/>
            <person name="Seno S."/>
            <person name="Sessa L."/>
            <person name="Sheng Y."/>
            <person name="Shibata Y."/>
            <person name="Shimada H."/>
            <person name="Shimada K."/>
            <person name="Silva D."/>
            <person name="Sinclair B."/>
            <person name="Sperling S."/>
            <person name="Stupka E."/>
            <person name="Sugiura K."/>
            <person name="Sultana R."/>
            <person name="Takenaka Y."/>
            <person name="Taki K."/>
            <person name="Tammoja K."/>
            <person name="Tan S.L."/>
            <person name="Tang S."/>
            <person name="Taylor M.S."/>
            <person name="Tegner J."/>
            <person name="Teichmann S.A."/>
            <person name="Ueda H.R."/>
            <person name="van Nimwegen E."/>
            <person name="Verardo R."/>
            <person name="Wei C.L."/>
            <person name="Yagi K."/>
            <person name="Yamanishi H."/>
            <person name="Zabarovsky E."/>
            <person name="Zhu S."/>
            <person name="Zimmer A."/>
            <person name="Hide W."/>
            <person name="Bult C."/>
            <person name="Grimmond S.M."/>
            <person name="Teasdale R.D."/>
            <person name="Liu E.T."/>
            <person name="Brusic V."/>
            <person name="Quackenbush J."/>
            <person name="Wahlestedt C."/>
            <person name="Mattick J.S."/>
            <person name="Hume D.A."/>
            <person name="Kai C."/>
            <person name="Sasaki D."/>
            <person name="Tomaru Y."/>
            <person name="Fukuda S."/>
            <person name="Kanamori-Katayama M."/>
            <person name="Suzuki M."/>
            <person name="Aoki J."/>
            <person name="Arakawa T."/>
            <person name="Iida J."/>
            <person name="Imamura K."/>
            <person name="Itoh M."/>
            <person name="Kato T."/>
            <person name="Kawaji H."/>
            <person name="Kawagashira N."/>
            <person name="Kawashima T."/>
            <person name="Kojima M."/>
            <person name="Kondo S."/>
            <person name="Konno H."/>
            <person name="Nakano K."/>
            <person name="Ninomiya N."/>
            <person name="Nishio T."/>
            <person name="Okada M."/>
            <person name="Plessy C."/>
            <person name="Shibata K."/>
            <person name="Shiraki T."/>
            <person name="Suzuki S."/>
            <person name="Tagami M."/>
            <person name="Waki K."/>
            <person name="Watahiki A."/>
            <person name="Okamura-Oho Y."/>
            <person name="Suzuki H."/>
            <person name="Kawai J."/>
            <person name="Hayashizaki Y."/>
        </authorList>
    </citation>
    <scope>NUCLEOTIDE SEQUENCE [LARGE SCALE MRNA] (ISOFORMS 1; 2 AND 3)</scope>
    <source>
        <strain>C57BL/6J</strain>
        <strain>NOD</strain>
        <tissue>Amnion</tissue>
        <tissue>Bone marrow</tissue>
        <tissue>Liver</tissue>
        <tissue>Thymus</tissue>
    </source>
</reference>
<reference key="2">
    <citation type="journal article" date="2004" name="Genome Res.">
        <title>The status, quality, and expansion of the NIH full-length cDNA project: the Mammalian Gene Collection (MGC).</title>
        <authorList>
            <consortium name="The MGC Project Team"/>
        </authorList>
    </citation>
    <scope>NUCLEOTIDE SEQUENCE [LARGE SCALE MRNA] (ISOFORM 1)</scope>
    <source>
        <strain>C57BL/6J</strain>
    </source>
</reference>
<reference key="3">
    <citation type="journal article" date="2010" name="Cell">
        <title>A tissue-specific atlas of mouse protein phosphorylation and expression.</title>
        <authorList>
            <person name="Huttlin E.L."/>
            <person name="Jedrychowski M.P."/>
            <person name="Elias J.E."/>
            <person name="Goswami T."/>
            <person name="Rad R."/>
            <person name="Beausoleil S.A."/>
            <person name="Villen J."/>
            <person name="Haas W."/>
            <person name="Sowa M.E."/>
            <person name="Gygi S.P."/>
        </authorList>
    </citation>
    <scope>IDENTIFICATION BY MASS SPECTROMETRY [LARGE SCALE ANALYSIS]</scope>
    <source>
        <tissue>Brown adipose tissue</tissue>
        <tissue>Kidney</tissue>
        <tissue>Liver</tissue>
        <tissue>Lung</tissue>
        <tissue>Spleen</tissue>
        <tissue>Testis</tissue>
    </source>
</reference>
<gene>
    <name type="primary">Lonp2</name>
</gene>
<feature type="initiator methionine" description="Removed" evidence="1">
    <location>
        <position position="1"/>
    </location>
</feature>
<feature type="chain" id="PRO_0000287641" description="Lon protease homolog 2, peroxisomal">
    <location>
        <begin position="2"/>
        <end position="852"/>
    </location>
</feature>
<feature type="domain" description="Lon N-terminal" evidence="4">
    <location>
        <begin position="13"/>
        <end position="222"/>
    </location>
</feature>
<feature type="domain" description="Lon proteolytic" evidence="3">
    <location>
        <begin position="651"/>
        <end position="837"/>
    </location>
</feature>
<feature type="short sequence motif" description="Microbody targeting signal" evidence="2">
    <location>
        <begin position="850"/>
        <end position="852"/>
    </location>
</feature>
<feature type="active site" evidence="2">
    <location>
        <position position="743"/>
    </location>
</feature>
<feature type="active site" evidence="2">
    <location>
        <position position="786"/>
    </location>
</feature>
<feature type="binding site" evidence="2">
    <location>
        <begin position="375"/>
        <end position="382"/>
    </location>
    <ligand>
        <name>ATP</name>
        <dbReference type="ChEBI" id="CHEBI:30616"/>
    </ligand>
</feature>
<feature type="modified residue" description="N-acetylserine" evidence="1">
    <location>
        <position position="2"/>
    </location>
</feature>
<feature type="splice variant" id="VSP_025576" description="In isoform 3." evidence="5">
    <location>
        <begin position="178"/>
        <end position="319"/>
    </location>
</feature>
<feature type="splice variant" id="VSP_025577" description="In isoform 2." evidence="5">
    <original>SERLSQPGVAIG</original>
    <variation>MILISMFTLVLA</variation>
    <location>
        <begin position="648"/>
        <end position="659"/>
    </location>
</feature>
<feature type="splice variant" id="VSP_025578" description="In isoform 2." evidence="5">
    <location>
        <begin position="660"/>
        <end position="852"/>
    </location>
</feature>
<feature type="sequence conflict" description="In Ref. 1; BAE30373." evidence="6" ref="1">
    <original>Q</original>
    <variation>P</variation>
    <location>
        <position position="87"/>
    </location>
</feature>
<feature type="sequence conflict" description="In Ref. 1; BAE40624/BAE40762." evidence="6" ref="1">
    <original>K</original>
    <variation>E</variation>
    <location>
        <position position="348"/>
    </location>
</feature>
<feature type="sequence conflict" description="In Ref. 1; BAE30373." evidence="6" ref="1">
    <original>D</original>
    <variation>V</variation>
    <location>
        <position position="740"/>
    </location>
</feature>
<organism>
    <name type="scientific">Mus musculus</name>
    <name type="common">Mouse</name>
    <dbReference type="NCBI Taxonomy" id="10090"/>
    <lineage>
        <taxon>Eukaryota</taxon>
        <taxon>Metazoa</taxon>
        <taxon>Chordata</taxon>
        <taxon>Craniata</taxon>
        <taxon>Vertebrata</taxon>
        <taxon>Euteleostomi</taxon>
        <taxon>Mammalia</taxon>
        <taxon>Eutheria</taxon>
        <taxon>Euarchontoglires</taxon>
        <taxon>Glires</taxon>
        <taxon>Rodentia</taxon>
        <taxon>Myomorpha</taxon>
        <taxon>Muroidea</taxon>
        <taxon>Muridae</taxon>
        <taxon>Murinae</taxon>
        <taxon>Mus</taxon>
        <taxon>Mus</taxon>
    </lineage>
</organism>
<protein>
    <recommendedName>
        <fullName evidence="2">Lon protease homolog 2, peroxisomal</fullName>
        <ecNumber evidence="2">3.4.21.53</ecNumber>
    </recommendedName>
    <alternativeName>
        <fullName evidence="2">Lon protease-like protein 2</fullName>
        <shortName evidence="2">Lon protease 2</shortName>
    </alternativeName>
    <alternativeName>
        <fullName evidence="2">Peroxisomal Lon protease</fullName>
    </alternativeName>
</protein>
<proteinExistence type="evidence at protein level"/>
<dbReference type="EC" id="3.4.21.53" evidence="2"/>
<dbReference type="EMBL" id="AK004843">
    <property type="protein sequence ID" value="BAB23609.1"/>
    <property type="molecule type" value="mRNA"/>
</dbReference>
<dbReference type="EMBL" id="AK050231">
    <property type="protein sequence ID" value="BAC34137.1"/>
    <property type="molecule type" value="mRNA"/>
</dbReference>
<dbReference type="EMBL" id="AK151103">
    <property type="protein sequence ID" value="BAE30113.1"/>
    <property type="molecule type" value="mRNA"/>
</dbReference>
<dbReference type="EMBL" id="AK151406">
    <property type="protein sequence ID" value="BAE30373.1"/>
    <property type="molecule type" value="mRNA"/>
</dbReference>
<dbReference type="EMBL" id="AK168791">
    <property type="protein sequence ID" value="BAE40624.1"/>
    <property type="molecule type" value="mRNA"/>
</dbReference>
<dbReference type="EMBL" id="AK168628">
    <property type="protein sequence ID" value="BAE40488.1"/>
    <property type="molecule type" value="mRNA"/>
</dbReference>
<dbReference type="EMBL" id="AK168956">
    <property type="protein sequence ID" value="BAE40762.1"/>
    <property type="molecule type" value="mRNA"/>
</dbReference>
<dbReference type="EMBL" id="AK169656">
    <property type="protein sequence ID" value="BAE41280.1"/>
    <property type="molecule type" value="mRNA"/>
</dbReference>
<dbReference type="EMBL" id="BC049090">
    <property type="protein sequence ID" value="AAH49090.1"/>
    <property type="molecule type" value="mRNA"/>
</dbReference>
<dbReference type="CCDS" id="CCDS22503.1">
    <molecule id="Q9DBN5-1"/>
</dbReference>
<dbReference type="RefSeq" id="NP_001162063.1">
    <property type="nucleotide sequence ID" value="NM_001168591.1"/>
</dbReference>
<dbReference type="RefSeq" id="NP_080103.1">
    <molecule id="Q9DBN5-1"/>
    <property type="nucleotide sequence ID" value="NM_025827.3"/>
</dbReference>
<dbReference type="SMR" id="Q9DBN5"/>
<dbReference type="BioGRID" id="211789">
    <property type="interactions" value="4"/>
</dbReference>
<dbReference type="FunCoup" id="Q9DBN5">
    <property type="interactions" value="1897"/>
</dbReference>
<dbReference type="STRING" id="10090.ENSMUSP00000034141"/>
<dbReference type="iPTMnet" id="Q9DBN5"/>
<dbReference type="PhosphoSitePlus" id="Q9DBN5"/>
<dbReference type="SwissPalm" id="Q9DBN5"/>
<dbReference type="jPOST" id="Q9DBN5"/>
<dbReference type="PaxDb" id="10090-ENSMUSP00000034141"/>
<dbReference type="PeptideAtlas" id="Q9DBN5"/>
<dbReference type="ProteomicsDB" id="290051">
    <molecule id="Q9DBN5-1"/>
</dbReference>
<dbReference type="ProteomicsDB" id="290052">
    <molecule id="Q9DBN5-2"/>
</dbReference>
<dbReference type="ProteomicsDB" id="290053">
    <molecule id="Q9DBN5-3"/>
</dbReference>
<dbReference type="Pumba" id="Q9DBN5"/>
<dbReference type="Antibodypedia" id="1715">
    <property type="antibodies" value="131 antibodies from 27 providers"/>
</dbReference>
<dbReference type="DNASU" id="66887"/>
<dbReference type="Ensembl" id="ENSMUST00000034141.18">
    <molecule id="Q9DBN5-1"/>
    <property type="protein sequence ID" value="ENSMUSP00000034141.12"/>
    <property type="gene ID" value="ENSMUSG00000047866.21"/>
</dbReference>
<dbReference type="Ensembl" id="ENSMUST00000122188.10">
    <molecule id="Q9DBN5-3"/>
    <property type="protein sequence ID" value="ENSMUSP00000113834.4"/>
    <property type="gene ID" value="ENSMUSG00000047866.21"/>
</dbReference>
<dbReference type="Ensembl" id="ENSMUST00000155433.10">
    <molecule id="Q9DBN5-2"/>
    <property type="protein sequence ID" value="ENSMUSP00000118737.4"/>
    <property type="gene ID" value="ENSMUSG00000047866.21"/>
</dbReference>
<dbReference type="GeneID" id="66887"/>
<dbReference type="KEGG" id="mmu:66887"/>
<dbReference type="UCSC" id="uc009mqm.3">
    <molecule id="Q9DBN5-1"/>
    <property type="organism name" value="mouse"/>
</dbReference>
<dbReference type="AGR" id="MGI:1914137"/>
<dbReference type="CTD" id="83752"/>
<dbReference type="MGI" id="MGI:1914137">
    <property type="gene designation" value="Lonp2"/>
</dbReference>
<dbReference type="VEuPathDB" id="HostDB:ENSMUSG00000047866"/>
<dbReference type="eggNOG" id="KOG2004">
    <property type="taxonomic scope" value="Eukaryota"/>
</dbReference>
<dbReference type="GeneTree" id="ENSGT00530000063553"/>
<dbReference type="HOGENOM" id="CLU_004109_4_2_1"/>
<dbReference type="InParanoid" id="Q9DBN5"/>
<dbReference type="OMA" id="EYFLHQQ"/>
<dbReference type="OrthoDB" id="2411602at2759"/>
<dbReference type="PhylomeDB" id="Q9DBN5"/>
<dbReference type="TreeFam" id="TF317215"/>
<dbReference type="BRENDA" id="3.6.4.7">
    <property type="organism ID" value="3474"/>
</dbReference>
<dbReference type="Reactome" id="R-MMU-9033241">
    <property type="pathway name" value="Peroxisomal protein import"/>
</dbReference>
<dbReference type="BioGRID-ORCS" id="66887">
    <property type="hits" value="2 hits in 77 CRISPR screens"/>
</dbReference>
<dbReference type="ChiTaRS" id="Lonp2">
    <property type="organism name" value="mouse"/>
</dbReference>
<dbReference type="PRO" id="PR:Q9DBN5"/>
<dbReference type="Proteomes" id="UP000000589">
    <property type="component" value="Chromosome 8"/>
</dbReference>
<dbReference type="RNAct" id="Q9DBN5">
    <property type="molecule type" value="protein"/>
</dbReference>
<dbReference type="Bgee" id="ENSMUSG00000047866">
    <property type="expression patterns" value="Expressed in left lobe of liver and 265 other cell types or tissues"/>
</dbReference>
<dbReference type="ExpressionAtlas" id="Q9DBN5">
    <property type="expression patterns" value="baseline and differential"/>
</dbReference>
<dbReference type="GO" id="GO:0005737">
    <property type="term" value="C:cytoplasm"/>
    <property type="evidence" value="ECO:0000314"/>
    <property type="project" value="MGI"/>
</dbReference>
<dbReference type="GO" id="GO:0005634">
    <property type="term" value="C:nucleus"/>
    <property type="evidence" value="ECO:0000314"/>
    <property type="project" value="MGI"/>
</dbReference>
<dbReference type="GO" id="GO:0005782">
    <property type="term" value="C:peroxisomal matrix"/>
    <property type="evidence" value="ECO:0000250"/>
    <property type="project" value="HGNC-UCL"/>
</dbReference>
<dbReference type="GO" id="GO:0005524">
    <property type="term" value="F:ATP binding"/>
    <property type="evidence" value="ECO:0007669"/>
    <property type="project" value="UniProtKB-UniRule"/>
</dbReference>
<dbReference type="GO" id="GO:0016887">
    <property type="term" value="F:ATP hydrolysis activity"/>
    <property type="evidence" value="ECO:0007669"/>
    <property type="project" value="UniProtKB-UniRule"/>
</dbReference>
<dbReference type="GO" id="GO:0004176">
    <property type="term" value="F:ATP-dependent peptidase activity"/>
    <property type="evidence" value="ECO:0007669"/>
    <property type="project" value="UniProtKB-UniRule"/>
</dbReference>
<dbReference type="GO" id="GO:0002020">
    <property type="term" value="F:protease binding"/>
    <property type="evidence" value="ECO:0007669"/>
    <property type="project" value="Ensembl"/>
</dbReference>
<dbReference type="GO" id="GO:0004252">
    <property type="term" value="F:serine-type endopeptidase activity"/>
    <property type="evidence" value="ECO:0007669"/>
    <property type="project" value="UniProtKB-UniRule"/>
</dbReference>
<dbReference type="GO" id="GO:0016558">
    <property type="term" value="P:protein import into peroxisome matrix"/>
    <property type="evidence" value="ECO:0007669"/>
    <property type="project" value="UniProtKB-UniRule"/>
</dbReference>
<dbReference type="GO" id="GO:0016485">
    <property type="term" value="P:protein processing"/>
    <property type="evidence" value="ECO:0007669"/>
    <property type="project" value="UniProtKB-UniRule"/>
</dbReference>
<dbReference type="GO" id="GO:0006515">
    <property type="term" value="P:protein quality control for misfolded or incompletely synthesized proteins"/>
    <property type="evidence" value="ECO:0007669"/>
    <property type="project" value="UniProtKB-UniRule"/>
</dbReference>
<dbReference type="GO" id="GO:0006625">
    <property type="term" value="P:protein targeting to peroxisome"/>
    <property type="evidence" value="ECO:0007669"/>
    <property type="project" value="Ensembl"/>
</dbReference>
<dbReference type="GO" id="GO:0031998">
    <property type="term" value="P:regulation of fatty acid beta-oxidation"/>
    <property type="evidence" value="ECO:0007669"/>
    <property type="project" value="Ensembl"/>
</dbReference>
<dbReference type="CDD" id="cd19500">
    <property type="entry name" value="RecA-like_Lon"/>
    <property type="match status" value="1"/>
</dbReference>
<dbReference type="FunFam" id="1.10.8.60:FF:000046">
    <property type="entry name" value="Lon protease homolog 2, peroxisomal"/>
    <property type="match status" value="1"/>
</dbReference>
<dbReference type="FunFam" id="1.20.5.5270:FF:000003">
    <property type="entry name" value="Lon protease homolog 2, peroxisomal"/>
    <property type="match status" value="1"/>
</dbReference>
<dbReference type="FunFam" id="2.30.130.40:FF:000003">
    <property type="entry name" value="Lon protease homolog 2, peroxisomal"/>
    <property type="match status" value="1"/>
</dbReference>
<dbReference type="FunFam" id="3.30.230.10:FF:000019">
    <property type="entry name" value="Lon protease homolog 2, peroxisomal"/>
    <property type="match status" value="1"/>
</dbReference>
<dbReference type="FunFam" id="3.40.50.300:FF:000382">
    <property type="entry name" value="Lon protease homolog 2, peroxisomal"/>
    <property type="match status" value="1"/>
</dbReference>
<dbReference type="Gene3D" id="1.10.8.60">
    <property type="match status" value="1"/>
</dbReference>
<dbReference type="Gene3D" id="1.20.5.5270">
    <property type="match status" value="1"/>
</dbReference>
<dbReference type="Gene3D" id="3.30.230.10">
    <property type="match status" value="1"/>
</dbReference>
<dbReference type="Gene3D" id="2.30.130.40">
    <property type="entry name" value="LON domain-like"/>
    <property type="match status" value="1"/>
</dbReference>
<dbReference type="Gene3D" id="3.40.50.300">
    <property type="entry name" value="P-loop containing nucleotide triphosphate hydrolases"/>
    <property type="match status" value="1"/>
</dbReference>
<dbReference type="HAMAP" id="MF_03121">
    <property type="entry name" value="lonp2_euk"/>
    <property type="match status" value="1"/>
</dbReference>
<dbReference type="InterPro" id="IPR003593">
    <property type="entry name" value="AAA+_ATPase"/>
</dbReference>
<dbReference type="InterPro" id="IPR003959">
    <property type="entry name" value="ATPase_AAA_core"/>
</dbReference>
<dbReference type="InterPro" id="IPR004815">
    <property type="entry name" value="Lon_bac/euk-typ"/>
</dbReference>
<dbReference type="InterPro" id="IPR054594">
    <property type="entry name" value="Lon_lid"/>
</dbReference>
<dbReference type="InterPro" id="IPR008269">
    <property type="entry name" value="Lon_proteolytic"/>
</dbReference>
<dbReference type="InterPro" id="IPR027065">
    <property type="entry name" value="Lon_Prtase"/>
</dbReference>
<dbReference type="InterPro" id="IPR003111">
    <property type="entry name" value="Lon_prtase_N"/>
</dbReference>
<dbReference type="InterPro" id="IPR046336">
    <property type="entry name" value="Lon_prtase_N_sf"/>
</dbReference>
<dbReference type="InterPro" id="IPR027501">
    <property type="entry name" value="Lonp2_euk"/>
</dbReference>
<dbReference type="InterPro" id="IPR027417">
    <property type="entry name" value="P-loop_NTPase"/>
</dbReference>
<dbReference type="InterPro" id="IPR008268">
    <property type="entry name" value="Peptidase_S16_AS"/>
</dbReference>
<dbReference type="InterPro" id="IPR015947">
    <property type="entry name" value="PUA-like_sf"/>
</dbReference>
<dbReference type="InterPro" id="IPR020568">
    <property type="entry name" value="Ribosomal_Su5_D2-typ_SF"/>
</dbReference>
<dbReference type="InterPro" id="IPR014721">
    <property type="entry name" value="Ribsml_uS5_D2-typ_fold_subgr"/>
</dbReference>
<dbReference type="NCBIfam" id="TIGR00763">
    <property type="entry name" value="lon"/>
    <property type="match status" value="1"/>
</dbReference>
<dbReference type="PANTHER" id="PTHR10046">
    <property type="entry name" value="ATP DEPENDENT LON PROTEASE FAMILY MEMBER"/>
    <property type="match status" value="1"/>
</dbReference>
<dbReference type="Pfam" id="PF00004">
    <property type="entry name" value="AAA"/>
    <property type="match status" value="1"/>
</dbReference>
<dbReference type="Pfam" id="PF05362">
    <property type="entry name" value="Lon_C"/>
    <property type="match status" value="1"/>
</dbReference>
<dbReference type="Pfam" id="PF22667">
    <property type="entry name" value="Lon_lid"/>
    <property type="match status" value="1"/>
</dbReference>
<dbReference type="Pfam" id="PF02190">
    <property type="entry name" value="LON_substr_bdg"/>
    <property type="match status" value="1"/>
</dbReference>
<dbReference type="PIRSF" id="PIRSF001174">
    <property type="entry name" value="Lon_proteas"/>
    <property type="match status" value="1"/>
</dbReference>
<dbReference type="PRINTS" id="PR00830">
    <property type="entry name" value="ENDOLAPTASE"/>
</dbReference>
<dbReference type="SMART" id="SM00382">
    <property type="entry name" value="AAA"/>
    <property type="match status" value="1"/>
</dbReference>
<dbReference type="SMART" id="SM00464">
    <property type="entry name" value="LON"/>
    <property type="match status" value="1"/>
</dbReference>
<dbReference type="SUPFAM" id="SSF52540">
    <property type="entry name" value="P-loop containing nucleoside triphosphate hydrolases"/>
    <property type="match status" value="1"/>
</dbReference>
<dbReference type="SUPFAM" id="SSF88697">
    <property type="entry name" value="PUA domain-like"/>
    <property type="match status" value="1"/>
</dbReference>
<dbReference type="SUPFAM" id="SSF54211">
    <property type="entry name" value="Ribosomal protein S5 domain 2-like"/>
    <property type="match status" value="1"/>
</dbReference>
<dbReference type="PROSITE" id="PS51787">
    <property type="entry name" value="LON_N"/>
    <property type="match status" value="1"/>
</dbReference>
<dbReference type="PROSITE" id="PS51786">
    <property type="entry name" value="LON_PROTEOLYTIC"/>
    <property type="match status" value="1"/>
</dbReference>
<dbReference type="PROSITE" id="PS01046">
    <property type="entry name" value="LON_SER"/>
    <property type="match status" value="1"/>
</dbReference>
<comment type="function">
    <text evidence="2">ATP-dependent serine protease that mediates the selective degradation of misfolded and unassembled polypeptides in the peroxisomal matrix. Necessary for type 2 peroxisome targeting signal (PTS2)-containing protein processing and facilitates peroxisome matrix protein import. May indirectly regulate peroxisomal fatty acid beta-oxidation through degradation of the self-processed forms of TYSND1.</text>
</comment>
<comment type="catalytic activity">
    <reaction evidence="2">
        <text>Hydrolysis of proteins in presence of ATP.</text>
        <dbReference type="EC" id="3.4.21.53"/>
    </reaction>
</comment>
<comment type="subunit">
    <text evidence="1 2">Interacts with PEX5. Interacts with TYSND1 (By similarity). May interact with enzymes involved in beta-oxidation of fatty acids, including ACOX1/AOX (By similarity).</text>
</comment>
<comment type="subcellular location">
    <subcellularLocation>
        <location evidence="1 2">Peroxisome matrix</location>
    </subcellularLocation>
</comment>
<comment type="alternative products">
    <event type="alternative splicing"/>
    <isoform>
        <id>Q9DBN5-1</id>
        <name>1</name>
        <sequence type="displayed"/>
    </isoform>
    <isoform>
        <id>Q9DBN5-2</id>
        <name>2</name>
        <sequence type="described" ref="VSP_025577 VSP_025578"/>
    </isoform>
    <isoform>
        <id>Q9DBN5-3</id>
        <name>3</name>
        <sequence type="described" ref="VSP_025576"/>
    </isoform>
</comment>
<comment type="similarity">
    <text evidence="2">Belongs to the peptidase S16 family.</text>
</comment>